<reference key="1">
    <citation type="journal article" date="2009" name="J. Bacteriol.">
        <title>Genome sequence of Azotobacter vinelandii, an obligate aerobe specialized to support diverse anaerobic metabolic processes.</title>
        <authorList>
            <person name="Setubal J.C."/>
            <person name="Dos Santos P."/>
            <person name="Goldman B.S."/>
            <person name="Ertesvaag H."/>
            <person name="Espin G."/>
            <person name="Rubio L.M."/>
            <person name="Valla S."/>
            <person name="Almeida N.F."/>
            <person name="Balasubramanian D."/>
            <person name="Cromes L."/>
            <person name="Curatti L."/>
            <person name="Du Z."/>
            <person name="Godsy E."/>
            <person name="Goodner B."/>
            <person name="Hellner-Burris K."/>
            <person name="Hernandez J.A."/>
            <person name="Houmiel K."/>
            <person name="Imperial J."/>
            <person name="Kennedy C."/>
            <person name="Larson T.J."/>
            <person name="Latreille P."/>
            <person name="Ligon L.S."/>
            <person name="Lu J."/>
            <person name="Maerk M."/>
            <person name="Miller N.M."/>
            <person name="Norton S."/>
            <person name="O'Carroll I.P."/>
            <person name="Paulsen I."/>
            <person name="Raulfs E.C."/>
            <person name="Roemer R."/>
            <person name="Rosser J."/>
            <person name="Segura D."/>
            <person name="Slater S."/>
            <person name="Stricklin S.L."/>
            <person name="Studholme D.J."/>
            <person name="Sun J."/>
            <person name="Viana C.J."/>
            <person name="Wallin E."/>
            <person name="Wang B."/>
            <person name="Wheeler C."/>
            <person name="Zhu H."/>
            <person name="Dean D.R."/>
            <person name="Dixon R."/>
            <person name="Wood D."/>
        </authorList>
    </citation>
    <scope>NUCLEOTIDE SEQUENCE [LARGE SCALE GENOMIC DNA]</scope>
    <source>
        <strain>DJ / ATCC BAA-1303</strain>
    </source>
</reference>
<feature type="chain" id="PRO_0000387783" description="4-hydroxy-2-oxovalerate aldolase 4">
    <location>
        <begin position="1"/>
        <end position="340"/>
    </location>
</feature>
<feature type="domain" description="Pyruvate carboxyltransferase" evidence="1">
    <location>
        <begin position="9"/>
        <end position="261"/>
    </location>
</feature>
<feature type="active site" description="Proton acceptor" evidence="1">
    <location>
        <position position="21"/>
    </location>
</feature>
<feature type="binding site" evidence="1">
    <location>
        <begin position="17"/>
        <end position="18"/>
    </location>
    <ligand>
        <name>substrate</name>
    </ligand>
</feature>
<feature type="binding site" evidence="1">
    <location>
        <position position="18"/>
    </location>
    <ligand>
        <name>Mn(2+)</name>
        <dbReference type="ChEBI" id="CHEBI:29035"/>
    </ligand>
</feature>
<feature type="binding site" evidence="1">
    <location>
        <position position="171"/>
    </location>
    <ligand>
        <name>substrate</name>
    </ligand>
</feature>
<feature type="binding site" evidence="1">
    <location>
        <position position="200"/>
    </location>
    <ligand>
        <name>Mn(2+)</name>
        <dbReference type="ChEBI" id="CHEBI:29035"/>
    </ligand>
</feature>
<feature type="binding site" evidence="1">
    <location>
        <position position="200"/>
    </location>
    <ligand>
        <name>substrate</name>
    </ligand>
</feature>
<feature type="binding site" evidence="1">
    <location>
        <position position="202"/>
    </location>
    <ligand>
        <name>Mn(2+)</name>
        <dbReference type="ChEBI" id="CHEBI:29035"/>
    </ligand>
</feature>
<feature type="binding site" evidence="1">
    <location>
        <position position="291"/>
    </location>
    <ligand>
        <name>substrate</name>
    </ligand>
</feature>
<feature type="site" description="Transition state stabilizer" evidence="1">
    <location>
        <position position="17"/>
    </location>
</feature>
<name>HOA4_AZOVD</name>
<protein>
    <recommendedName>
        <fullName evidence="1">4-hydroxy-2-oxovalerate aldolase 4</fullName>
        <shortName evidence="1">HOA 4</shortName>
        <ecNumber evidence="1">4.1.3.39</ecNumber>
    </recommendedName>
    <alternativeName>
        <fullName evidence="1">4-hydroxy-2-keto-pentanoic acid aldolase 4</fullName>
    </alternativeName>
    <alternativeName>
        <fullName evidence="1">4-hydroxy-2-oxopentanoate aldolase 4</fullName>
    </alternativeName>
</protein>
<organism>
    <name type="scientific">Azotobacter vinelandii (strain DJ / ATCC BAA-1303)</name>
    <dbReference type="NCBI Taxonomy" id="322710"/>
    <lineage>
        <taxon>Bacteria</taxon>
        <taxon>Pseudomonadati</taxon>
        <taxon>Pseudomonadota</taxon>
        <taxon>Gammaproteobacteria</taxon>
        <taxon>Pseudomonadales</taxon>
        <taxon>Pseudomonadaceae</taxon>
        <taxon>Azotobacter</taxon>
    </lineage>
</organism>
<evidence type="ECO:0000255" key="1">
    <source>
        <dbReference type="HAMAP-Rule" id="MF_01656"/>
    </source>
</evidence>
<sequence length="340" mass="36879">MTFNPGKKLYISDVTLRDGSHAIRHQYSIKNVQAIARALDQAKVDSIEVAHGDGLQGSSFNYGFGAHTDLEWIEAVAEVVTHARIATLLLPGIGTVHHLKEAYEAGARIVRVATHCTEADVSRQHIAYARELGMDTVGFLMMSHMTTPQNLAVEAKKMESYGATCIYVVDSGGALSMQDVRERFRAVKDLLEPSTQTGIHAHHNLSLGVANSIVAVEEGCDRIDASLAGMGAGAGNAPLEVFVAAAERLGWNHGTDLYTLMDAADEIVRPLQDRPVRVDRETLALGYAGVYSSFLRHAEVAAEKYGLSTVDILVELGRRRMVGGQEDMIVDVALDLLERS</sequence>
<comment type="catalytic activity">
    <reaction evidence="1">
        <text>(S)-4-hydroxy-2-oxopentanoate = acetaldehyde + pyruvate</text>
        <dbReference type="Rhea" id="RHEA:22624"/>
        <dbReference type="ChEBI" id="CHEBI:15343"/>
        <dbReference type="ChEBI" id="CHEBI:15361"/>
        <dbReference type="ChEBI" id="CHEBI:73143"/>
        <dbReference type="EC" id="4.1.3.39"/>
    </reaction>
</comment>
<comment type="similarity">
    <text evidence="1">Belongs to the 4-hydroxy-2-oxovalerate aldolase family.</text>
</comment>
<keyword id="KW-0058">Aromatic hydrocarbons catabolism</keyword>
<keyword id="KW-0456">Lyase</keyword>
<keyword id="KW-0464">Manganese</keyword>
<keyword id="KW-0479">Metal-binding</keyword>
<proteinExistence type="inferred from homology"/>
<dbReference type="EC" id="4.1.3.39" evidence="1"/>
<dbReference type="EMBL" id="CP001157">
    <property type="protein sequence ID" value="ACO80339.1"/>
    <property type="molecule type" value="Genomic_DNA"/>
</dbReference>
<dbReference type="RefSeq" id="WP_012702707.1">
    <property type="nucleotide sequence ID" value="NC_012560.1"/>
</dbReference>
<dbReference type="SMR" id="C1DF10"/>
<dbReference type="STRING" id="322710.Avin_42120"/>
<dbReference type="EnsemblBacteria" id="ACO80339">
    <property type="protein sequence ID" value="ACO80339"/>
    <property type="gene ID" value="Avin_42120"/>
</dbReference>
<dbReference type="GeneID" id="88187127"/>
<dbReference type="KEGG" id="avn:Avin_42120"/>
<dbReference type="eggNOG" id="COG0119">
    <property type="taxonomic scope" value="Bacteria"/>
</dbReference>
<dbReference type="HOGENOM" id="CLU_049173_0_0_6"/>
<dbReference type="OrthoDB" id="9803573at2"/>
<dbReference type="Proteomes" id="UP000002424">
    <property type="component" value="Chromosome"/>
</dbReference>
<dbReference type="GO" id="GO:0003852">
    <property type="term" value="F:2-isopropylmalate synthase activity"/>
    <property type="evidence" value="ECO:0007669"/>
    <property type="project" value="TreeGrafter"/>
</dbReference>
<dbReference type="GO" id="GO:0008701">
    <property type="term" value="F:4-hydroxy-2-oxovalerate aldolase activity"/>
    <property type="evidence" value="ECO:0007669"/>
    <property type="project" value="UniProtKB-UniRule"/>
</dbReference>
<dbReference type="GO" id="GO:0030145">
    <property type="term" value="F:manganese ion binding"/>
    <property type="evidence" value="ECO:0007669"/>
    <property type="project" value="UniProtKB-UniRule"/>
</dbReference>
<dbReference type="GO" id="GO:0009056">
    <property type="term" value="P:catabolic process"/>
    <property type="evidence" value="ECO:0007669"/>
    <property type="project" value="UniProtKB-KW"/>
</dbReference>
<dbReference type="GO" id="GO:0009098">
    <property type="term" value="P:L-leucine biosynthetic process"/>
    <property type="evidence" value="ECO:0007669"/>
    <property type="project" value="TreeGrafter"/>
</dbReference>
<dbReference type="CDD" id="cd07943">
    <property type="entry name" value="DRE_TIM_HOA"/>
    <property type="match status" value="1"/>
</dbReference>
<dbReference type="FunFam" id="1.10.8.60:FF:000042">
    <property type="entry name" value="4-hydroxy-2-oxovalerate aldolase"/>
    <property type="match status" value="1"/>
</dbReference>
<dbReference type="Gene3D" id="1.10.8.60">
    <property type="match status" value="1"/>
</dbReference>
<dbReference type="Gene3D" id="3.20.20.70">
    <property type="entry name" value="Aldolase class I"/>
    <property type="match status" value="1"/>
</dbReference>
<dbReference type="HAMAP" id="MF_01656">
    <property type="entry name" value="HOA"/>
    <property type="match status" value="1"/>
</dbReference>
<dbReference type="InterPro" id="IPR050073">
    <property type="entry name" value="2-IPM_HCS-like"/>
</dbReference>
<dbReference type="InterPro" id="IPR017629">
    <property type="entry name" value="4OH_2_O-val_aldolase"/>
</dbReference>
<dbReference type="InterPro" id="IPR013785">
    <property type="entry name" value="Aldolase_TIM"/>
</dbReference>
<dbReference type="InterPro" id="IPR012425">
    <property type="entry name" value="DmpG_comm"/>
</dbReference>
<dbReference type="InterPro" id="IPR035685">
    <property type="entry name" value="DRE_TIM_HOA"/>
</dbReference>
<dbReference type="InterPro" id="IPR000891">
    <property type="entry name" value="PYR_CT"/>
</dbReference>
<dbReference type="NCBIfam" id="TIGR03217">
    <property type="entry name" value="4OH_2_O_val_ald"/>
    <property type="match status" value="1"/>
</dbReference>
<dbReference type="NCBIfam" id="NF006049">
    <property type="entry name" value="PRK08195.1"/>
    <property type="match status" value="1"/>
</dbReference>
<dbReference type="PANTHER" id="PTHR10277:SF9">
    <property type="entry name" value="2-ISOPROPYLMALATE SYNTHASE 1, CHLOROPLASTIC-RELATED"/>
    <property type="match status" value="1"/>
</dbReference>
<dbReference type="PANTHER" id="PTHR10277">
    <property type="entry name" value="HOMOCITRATE SYNTHASE-RELATED"/>
    <property type="match status" value="1"/>
</dbReference>
<dbReference type="Pfam" id="PF07836">
    <property type="entry name" value="DmpG_comm"/>
    <property type="match status" value="1"/>
</dbReference>
<dbReference type="Pfam" id="PF00682">
    <property type="entry name" value="HMGL-like"/>
    <property type="match status" value="1"/>
</dbReference>
<dbReference type="SUPFAM" id="SSF51569">
    <property type="entry name" value="Aldolase"/>
    <property type="match status" value="1"/>
</dbReference>
<dbReference type="SUPFAM" id="SSF89000">
    <property type="entry name" value="post-HMGL domain-like"/>
    <property type="match status" value="1"/>
</dbReference>
<dbReference type="PROSITE" id="PS50991">
    <property type="entry name" value="PYR_CT"/>
    <property type="match status" value="1"/>
</dbReference>
<gene>
    <name type="ordered locus">Avin_42120</name>
</gene>
<accession>C1DF10</accession>